<sequence length="296" mass="33099">MIKILGRHLRESFKSLGRNTWMTFASISAVTVTLILVGVFLVIMLNLNNMATNAEKQVEIKVLIDLTADQKAQDKLQNDIKELKGIQSVTFSSKEKELDQLVDSFGDSGKSLTMKDQENPLNDAFVVKTTDPHDTPNVAKKIEKMDHVYKVTYGKEEVSRLFKVVGVSRNIGIALIIGLVFTAMFLISNTIKITIFARRKEIEIMKLVGATNWFIRWPFFLEGLLLGVFGSVIPIALVLSTYQYVIGWVVPKVQGSFVSLLPYNPFVFQVSLVLIAIGAVIGVWGSLTSIRKFLRV</sequence>
<dbReference type="EMBL" id="AF017113">
    <property type="protein sequence ID" value="AAC67264.1"/>
    <property type="molecule type" value="Genomic_DNA"/>
</dbReference>
<dbReference type="EMBL" id="AL009126">
    <property type="protein sequence ID" value="CAB15542.1"/>
    <property type="molecule type" value="Genomic_DNA"/>
</dbReference>
<dbReference type="PIR" id="G69627">
    <property type="entry name" value="G69627"/>
</dbReference>
<dbReference type="RefSeq" id="NP_391405.1">
    <property type="nucleotide sequence ID" value="NC_000964.3"/>
</dbReference>
<dbReference type="RefSeq" id="WP_009968247.1">
    <property type="nucleotide sequence ID" value="NZ_OZ025638.1"/>
</dbReference>
<dbReference type="SMR" id="O34876"/>
<dbReference type="FunCoup" id="O34876">
    <property type="interactions" value="233"/>
</dbReference>
<dbReference type="STRING" id="224308.BSU35250"/>
<dbReference type="jPOST" id="O34876"/>
<dbReference type="PaxDb" id="224308-BSU35250"/>
<dbReference type="EnsemblBacteria" id="CAB15542">
    <property type="protein sequence ID" value="CAB15542"/>
    <property type="gene ID" value="BSU_35250"/>
</dbReference>
<dbReference type="GeneID" id="936708"/>
<dbReference type="KEGG" id="bsu:BSU35250"/>
<dbReference type="PATRIC" id="fig|224308.179.peg.3815"/>
<dbReference type="eggNOG" id="COG2177">
    <property type="taxonomic scope" value="Bacteria"/>
</dbReference>
<dbReference type="InParanoid" id="O34876"/>
<dbReference type="OrthoDB" id="9812531at2"/>
<dbReference type="PhylomeDB" id="O34876"/>
<dbReference type="BioCyc" id="BSUB:BSU35250-MONOMER"/>
<dbReference type="Proteomes" id="UP000001570">
    <property type="component" value="Chromosome"/>
</dbReference>
<dbReference type="GO" id="GO:0045121">
    <property type="term" value="C:membrane raft"/>
    <property type="evidence" value="ECO:0007669"/>
    <property type="project" value="UniProtKB-SubCell"/>
</dbReference>
<dbReference type="GO" id="GO:0005886">
    <property type="term" value="C:plasma membrane"/>
    <property type="evidence" value="ECO:0000314"/>
    <property type="project" value="UniProtKB"/>
</dbReference>
<dbReference type="GO" id="GO:0008356">
    <property type="term" value="P:asymmetric cell division"/>
    <property type="evidence" value="ECO:0000316"/>
    <property type="project" value="UniProtKB"/>
</dbReference>
<dbReference type="GO" id="GO:0090529">
    <property type="term" value="P:cell septum assembly"/>
    <property type="evidence" value="ECO:0000316"/>
    <property type="project" value="UniProtKB"/>
</dbReference>
<dbReference type="GO" id="GO:0045881">
    <property type="term" value="P:positive regulation of sporulation resulting in formation of a cellular spore"/>
    <property type="evidence" value="ECO:0000316"/>
    <property type="project" value="UniProtKB"/>
</dbReference>
<dbReference type="GO" id="GO:0070297">
    <property type="term" value="P:regulation of phosphorelay signal transduction system"/>
    <property type="evidence" value="ECO:0000315"/>
    <property type="project" value="UniProtKB"/>
</dbReference>
<dbReference type="Gene3D" id="3.30.70.3040">
    <property type="match status" value="1"/>
</dbReference>
<dbReference type="InterPro" id="IPR003838">
    <property type="entry name" value="ABC3_permease_C"/>
</dbReference>
<dbReference type="InterPro" id="IPR004513">
    <property type="entry name" value="FtsX"/>
</dbReference>
<dbReference type="InterPro" id="IPR040690">
    <property type="entry name" value="FtsX_ECD"/>
</dbReference>
<dbReference type="NCBIfam" id="NF038347">
    <property type="entry name" value="FtsX_Gpos"/>
    <property type="match status" value="1"/>
</dbReference>
<dbReference type="PANTHER" id="PTHR47755">
    <property type="entry name" value="CELL DIVISION PROTEIN FTSX"/>
    <property type="match status" value="1"/>
</dbReference>
<dbReference type="PANTHER" id="PTHR47755:SF1">
    <property type="entry name" value="CELL DIVISION PROTEIN FTSX"/>
    <property type="match status" value="1"/>
</dbReference>
<dbReference type="Pfam" id="PF02687">
    <property type="entry name" value="FtsX"/>
    <property type="match status" value="1"/>
</dbReference>
<dbReference type="Pfam" id="PF18075">
    <property type="entry name" value="FtsX_ECD"/>
    <property type="match status" value="1"/>
</dbReference>
<dbReference type="PIRSF" id="PIRSF003097">
    <property type="entry name" value="FtsX"/>
    <property type="match status" value="1"/>
</dbReference>
<accession>O34876</accession>
<reference key="1">
    <citation type="submission" date="1997-11" db="EMBL/GenBank/DDBJ databases">
        <title>Nucleotide sequence of the 300-304 chromosomal segment of Bacillus subtilis.</title>
        <authorList>
            <person name="Lazarevic V."/>
            <person name="Soldo B."/>
            <person name="Rivolta C."/>
            <person name="Reynolds S."/>
            <person name="Mauel C."/>
            <person name="Karamata D."/>
        </authorList>
    </citation>
    <scope>NUCLEOTIDE SEQUENCE [GENOMIC DNA]</scope>
</reference>
<reference key="2">
    <citation type="journal article" date="1997" name="Nature">
        <title>The complete genome sequence of the Gram-positive bacterium Bacillus subtilis.</title>
        <authorList>
            <person name="Kunst F."/>
            <person name="Ogasawara N."/>
            <person name="Moszer I."/>
            <person name="Albertini A.M."/>
            <person name="Alloni G."/>
            <person name="Azevedo V."/>
            <person name="Bertero M.G."/>
            <person name="Bessieres P."/>
            <person name="Bolotin A."/>
            <person name="Borchert S."/>
            <person name="Borriss R."/>
            <person name="Boursier L."/>
            <person name="Brans A."/>
            <person name="Braun M."/>
            <person name="Brignell S.C."/>
            <person name="Bron S."/>
            <person name="Brouillet S."/>
            <person name="Bruschi C.V."/>
            <person name="Caldwell B."/>
            <person name="Capuano V."/>
            <person name="Carter N.M."/>
            <person name="Choi S.-K."/>
            <person name="Codani J.-J."/>
            <person name="Connerton I.F."/>
            <person name="Cummings N.J."/>
            <person name="Daniel R.A."/>
            <person name="Denizot F."/>
            <person name="Devine K.M."/>
            <person name="Duesterhoeft A."/>
            <person name="Ehrlich S.D."/>
            <person name="Emmerson P.T."/>
            <person name="Entian K.-D."/>
            <person name="Errington J."/>
            <person name="Fabret C."/>
            <person name="Ferrari E."/>
            <person name="Foulger D."/>
            <person name="Fritz C."/>
            <person name="Fujita M."/>
            <person name="Fujita Y."/>
            <person name="Fuma S."/>
            <person name="Galizzi A."/>
            <person name="Galleron N."/>
            <person name="Ghim S.-Y."/>
            <person name="Glaser P."/>
            <person name="Goffeau A."/>
            <person name="Golightly E.J."/>
            <person name="Grandi G."/>
            <person name="Guiseppi G."/>
            <person name="Guy B.J."/>
            <person name="Haga K."/>
            <person name="Haiech J."/>
            <person name="Harwood C.R."/>
            <person name="Henaut A."/>
            <person name="Hilbert H."/>
            <person name="Holsappel S."/>
            <person name="Hosono S."/>
            <person name="Hullo M.-F."/>
            <person name="Itaya M."/>
            <person name="Jones L.-M."/>
            <person name="Joris B."/>
            <person name="Karamata D."/>
            <person name="Kasahara Y."/>
            <person name="Klaerr-Blanchard M."/>
            <person name="Klein C."/>
            <person name="Kobayashi Y."/>
            <person name="Koetter P."/>
            <person name="Koningstein G."/>
            <person name="Krogh S."/>
            <person name="Kumano M."/>
            <person name="Kurita K."/>
            <person name="Lapidus A."/>
            <person name="Lardinois S."/>
            <person name="Lauber J."/>
            <person name="Lazarevic V."/>
            <person name="Lee S.-M."/>
            <person name="Levine A."/>
            <person name="Liu H."/>
            <person name="Masuda S."/>
            <person name="Mauel C."/>
            <person name="Medigue C."/>
            <person name="Medina N."/>
            <person name="Mellado R.P."/>
            <person name="Mizuno M."/>
            <person name="Moestl D."/>
            <person name="Nakai S."/>
            <person name="Noback M."/>
            <person name="Noone D."/>
            <person name="O'Reilly M."/>
            <person name="Ogawa K."/>
            <person name="Ogiwara A."/>
            <person name="Oudega B."/>
            <person name="Park S.-H."/>
            <person name="Parro V."/>
            <person name="Pohl T.M."/>
            <person name="Portetelle D."/>
            <person name="Porwollik S."/>
            <person name="Prescott A.M."/>
            <person name="Presecan E."/>
            <person name="Pujic P."/>
            <person name="Purnelle B."/>
            <person name="Rapoport G."/>
            <person name="Rey M."/>
            <person name="Reynolds S."/>
            <person name="Rieger M."/>
            <person name="Rivolta C."/>
            <person name="Rocha E."/>
            <person name="Roche B."/>
            <person name="Rose M."/>
            <person name="Sadaie Y."/>
            <person name="Sato T."/>
            <person name="Scanlan E."/>
            <person name="Schleich S."/>
            <person name="Schroeter R."/>
            <person name="Scoffone F."/>
            <person name="Sekiguchi J."/>
            <person name="Sekowska A."/>
            <person name="Seror S.J."/>
            <person name="Serror P."/>
            <person name="Shin B.-S."/>
            <person name="Soldo B."/>
            <person name="Sorokin A."/>
            <person name="Tacconi E."/>
            <person name="Takagi T."/>
            <person name="Takahashi H."/>
            <person name="Takemaru K."/>
            <person name="Takeuchi M."/>
            <person name="Tamakoshi A."/>
            <person name="Tanaka T."/>
            <person name="Terpstra P."/>
            <person name="Tognoni A."/>
            <person name="Tosato V."/>
            <person name="Uchiyama S."/>
            <person name="Vandenbol M."/>
            <person name="Vannier F."/>
            <person name="Vassarotti A."/>
            <person name="Viari A."/>
            <person name="Wambutt R."/>
            <person name="Wedler E."/>
            <person name="Wedler H."/>
            <person name="Weitzenegger T."/>
            <person name="Winters P."/>
            <person name="Wipat A."/>
            <person name="Yamamoto H."/>
            <person name="Yamane K."/>
            <person name="Yasumoto K."/>
            <person name="Yata K."/>
            <person name="Yoshida K."/>
            <person name="Yoshikawa H.-F."/>
            <person name="Zumstein E."/>
            <person name="Yoshikawa H."/>
            <person name="Danchin A."/>
        </authorList>
    </citation>
    <scope>NUCLEOTIDE SEQUENCE [LARGE SCALE GENOMIC DNA]</scope>
    <source>
        <strain>168</strain>
    </source>
</reference>
<reference key="3">
    <citation type="journal article" date="2008" name="Mol. Microbiol.">
        <title>The FtsEX ABC transporter directs cellular differentiation in Bacillus subtilis.</title>
        <authorList>
            <person name="Garti-Levi S."/>
            <person name="Hazan R."/>
            <person name="Kain J."/>
            <person name="Fujita M."/>
            <person name="Ben-Yehuda S."/>
        </authorList>
    </citation>
    <scope>FUNCTION IN SPORULATION</scope>
    <scope>SUBCELLULAR LOCATION</scope>
    <scope>DISRUPTION PHENOTYPE</scope>
    <source>
        <strain>168 / PY79</strain>
    </source>
</reference>
<reference key="4">
    <citation type="journal article" date="2013" name="Mol. Microbiol.">
        <title>Flotillins functionally organize the bacterial membrane.</title>
        <authorList>
            <person name="Bach J.N."/>
            <person name="Bramkamp M."/>
        </authorList>
    </citation>
    <scope>INTERACTION WITH FLOT</scope>
    <scope>SUBCELLULAR LOCATION</scope>
    <source>
        <strain>168</strain>
    </source>
</reference>
<keyword id="KW-0131">Cell cycle</keyword>
<keyword id="KW-0132">Cell division</keyword>
<keyword id="KW-1003">Cell membrane</keyword>
<keyword id="KW-0472">Membrane</keyword>
<keyword id="KW-1185">Reference proteome</keyword>
<keyword id="KW-0812">Transmembrane</keyword>
<keyword id="KW-1133">Transmembrane helix</keyword>
<comment type="function">
    <text evidence="2">Part of the ABC transporter FtsEX involved in asymmetric cellular division facilitating the initiation of sporulation. May act as an importer, possibly at the top of a hierarchical cascade leading to the correct temporal initiation of sporulation. Acts upstream of the histidine kinases KinA, KinB and KinC, the RapA phosphatase and the Spo0A sporulation protein.</text>
</comment>
<comment type="subunit">
    <text evidence="3 4">Interacts with FtsE (Probable). Interacts with FloT (PubMed:23651456).</text>
</comment>
<comment type="subcellular location">
    <subcellularLocation>
        <location evidence="3 5">Cell membrane</location>
        <topology evidence="5">Multi-pass membrane protein</topology>
    </subcellularLocation>
    <subcellularLocation>
        <location evidence="3">Membrane raft</location>
        <topology>Multi-pass membrane protein</topology>
    </subcellularLocation>
    <text evidence="3">Unlike the E.coli ortholog, localization is not restricted to division septa, nor is it dependent on FtsZ. Present in detergent-resistant membrane (DRM) fractions that may be equivalent to eukaryotic membrane rafts; these rafts include proteins involved in signaling, molecule trafficking and protein secretion (PubMed:23651456).</text>
</comment>
<comment type="disruption phenotype">
    <text evidence="2">Cells lacking this gene and ftsE, the previous gene in the operon, delay sporulation onset, as a result of which they form a medial rather than polar septum at the onset of sporulation. This is presumably due to slower phosphorylation and activation of the spo0A transcriptional regulator. However, at later time points these cells undergo polar division and eventually form smaller than wild-type mature spores.</text>
</comment>
<comment type="similarity">
    <text evidence="4">Belongs to the ABC-4 integral membrane protein family. FtsX subfamily.</text>
</comment>
<feature type="chain" id="PRO_0000166791" description="Cell division protein FtsX">
    <location>
        <begin position="1"/>
        <end position="296"/>
    </location>
</feature>
<feature type="topological domain" description="Cytoplasmic" evidence="1">
    <location>
        <begin position="1"/>
        <end position="23"/>
    </location>
</feature>
<feature type="transmembrane region" description="Helical" evidence="1">
    <location>
        <begin position="24"/>
        <end position="44"/>
    </location>
</feature>
<feature type="topological domain" description="Extracellular" evidence="1">
    <location>
        <begin position="45"/>
        <end position="170"/>
    </location>
</feature>
<feature type="transmembrane region" description="Helical" evidence="1">
    <location>
        <begin position="171"/>
        <end position="191"/>
    </location>
</feature>
<feature type="topological domain" description="Cytoplasmic" evidence="1">
    <location>
        <begin position="192"/>
        <end position="218"/>
    </location>
</feature>
<feature type="transmembrane region" description="Helical" evidence="1">
    <location>
        <begin position="219"/>
        <end position="239"/>
    </location>
</feature>
<feature type="topological domain" description="Extracellular" evidence="1">
    <location>
        <begin position="240"/>
        <end position="264"/>
    </location>
</feature>
<feature type="transmembrane region" description="Helical" evidence="1">
    <location>
        <begin position="265"/>
        <end position="285"/>
    </location>
</feature>
<feature type="topological domain" description="Cytoplasmic" evidence="1">
    <location>
        <begin position="286"/>
        <end position="296"/>
    </location>
</feature>
<organism>
    <name type="scientific">Bacillus subtilis (strain 168)</name>
    <dbReference type="NCBI Taxonomy" id="224308"/>
    <lineage>
        <taxon>Bacteria</taxon>
        <taxon>Bacillati</taxon>
        <taxon>Bacillota</taxon>
        <taxon>Bacilli</taxon>
        <taxon>Bacillales</taxon>
        <taxon>Bacillaceae</taxon>
        <taxon>Bacillus</taxon>
    </lineage>
</organism>
<protein>
    <recommendedName>
        <fullName>Cell division protein FtsX</fullName>
    </recommendedName>
</protein>
<gene>
    <name type="primary">ftsX</name>
    <name type="ordered locus">BSU35250</name>
</gene>
<evidence type="ECO:0000255" key="1"/>
<evidence type="ECO:0000269" key="2">
    <source>
    </source>
</evidence>
<evidence type="ECO:0000269" key="3">
    <source>
    </source>
</evidence>
<evidence type="ECO:0000305" key="4"/>
<evidence type="ECO:0000305" key="5">
    <source>
    </source>
</evidence>
<proteinExistence type="evidence at protein level"/>
<name>FTSX_BACSU</name>